<proteinExistence type="inferred from homology"/>
<evidence type="ECO:0000255" key="1">
    <source>
        <dbReference type="HAMAP-Rule" id="MF_00236"/>
    </source>
</evidence>
<evidence type="ECO:0000256" key="2">
    <source>
        <dbReference type="SAM" id="MobiDB-lite"/>
    </source>
</evidence>
<keyword id="KW-0997">Cell inner membrane</keyword>
<keyword id="KW-1003">Cell membrane</keyword>
<keyword id="KW-0472">Membrane</keyword>
<keyword id="KW-0653">Protein transport</keyword>
<keyword id="KW-1185">Reference proteome</keyword>
<keyword id="KW-0811">Translocation</keyword>
<keyword id="KW-0812">Transmembrane</keyword>
<keyword id="KW-1133">Transmembrane helix</keyword>
<keyword id="KW-0813">Transport</keyword>
<reference key="1">
    <citation type="journal article" date="2006" name="Nat. Biotechnol.">
        <title>Genome sequence of the ubiquitous hydrocarbon-degrading marine bacterium Alcanivorax borkumensis.</title>
        <authorList>
            <person name="Schneiker S."/>
            <person name="Martins dos Santos V.A.P."/>
            <person name="Bartels D."/>
            <person name="Bekel T."/>
            <person name="Brecht M."/>
            <person name="Buhrmester J."/>
            <person name="Chernikova T.N."/>
            <person name="Denaro R."/>
            <person name="Ferrer M."/>
            <person name="Gertler C."/>
            <person name="Goesmann A."/>
            <person name="Golyshina O.V."/>
            <person name="Kaminski F."/>
            <person name="Khachane A.N."/>
            <person name="Lang S."/>
            <person name="Linke B."/>
            <person name="McHardy A.C."/>
            <person name="Meyer F."/>
            <person name="Nechitaylo T."/>
            <person name="Puehler A."/>
            <person name="Regenhardt D."/>
            <person name="Rupp O."/>
            <person name="Sabirova J.S."/>
            <person name="Selbitschka W."/>
            <person name="Yakimov M.M."/>
            <person name="Timmis K.N."/>
            <person name="Vorhoelter F.-J."/>
            <person name="Weidner S."/>
            <person name="Kaiser O."/>
            <person name="Golyshin P.N."/>
        </authorList>
    </citation>
    <scope>NUCLEOTIDE SEQUENCE [LARGE SCALE GENOMIC DNA]</scope>
    <source>
        <strain>ATCC 700651 / DSM 11573 / NCIMB 13689 / SK2</strain>
    </source>
</reference>
<name>TATA_ALCBS</name>
<gene>
    <name evidence="1" type="primary">tatA</name>
    <name type="ordered locus">ABO_2250</name>
</gene>
<protein>
    <recommendedName>
        <fullName evidence="1">Sec-independent protein translocase protein TatA</fullName>
    </recommendedName>
</protein>
<dbReference type="EMBL" id="AM286690">
    <property type="protein sequence ID" value="CAL17698.1"/>
    <property type="molecule type" value="Genomic_DNA"/>
</dbReference>
<dbReference type="RefSeq" id="WP_011589525.1">
    <property type="nucleotide sequence ID" value="NC_008260.1"/>
</dbReference>
<dbReference type="SMR" id="Q0VMA0"/>
<dbReference type="STRING" id="393595.ABO_2250"/>
<dbReference type="KEGG" id="abo:ABO_2250"/>
<dbReference type="eggNOG" id="COG1826">
    <property type="taxonomic scope" value="Bacteria"/>
</dbReference>
<dbReference type="HOGENOM" id="CLU_086034_5_1_6"/>
<dbReference type="OrthoDB" id="7066617at2"/>
<dbReference type="Proteomes" id="UP000008871">
    <property type="component" value="Chromosome"/>
</dbReference>
<dbReference type="GO" id="GO:0033281">
    <property type="term" value="C:TAT protein transport complex"/>
    <property type="evidence" value="ECO:0007669"/>
    <property type="project" value="UniProtKB-UniRule"/>
</dbReference>
<dbReference type="GO" id="GO:0008320">
    <property type="term" value="F:protein transmembrane transporter activity"/>
    <property type="evidence" value="ECO:0007669"/>
    <property type="project" value="UniProtKB-UniRule"/>
</dbReference>
<dbReference type="GO" id="GO:0043953">
    <property type="term" value="P:protein transport by the Tat complex"/>
    <property type="evidence" value="ECO:0007669"/>
    <property type="project" value="UniProtKB-UniRule"/>
</dbReference>
<dbReference type="Gene3D" id="1.20.5.3310">
    <property type="match status" value="1"/>
</dbReference>
<dbReference type="HAMAP" id="MF_00236">
    <property type="entry name" value="TatA_E"/>
    <property type="match status" value="1"/>
</dbReference>
<dbReference type="InterPro" id="IPR003369">
    <property type="entry name" value="TatA/B/E"/>
</dbReference>
<dbReference type="InterPro" id="IPR006312">
    <property type="entry name" value="TatA/E"/>
</dbReference>
<dbReference type="NCBIfam" id="NF002813">
    <property type="entry name" value="PRK02958.1"/>
    <property type="match status" value="1"/>
</dbReference>
<dbReference type="NCBIfam" id="TIGR01411">
    <property type="entry name" value="tatAE"/>
    <property type="match status" value="1"/>
</dbReference>
<dbReference type="PANTHER" id="PTHR42982">
    <property type="entry name" value="SEC-INDEPENDENT PROTEIN TRANSLOCASE PROTEIN TATA"/>
    <property type="match status" value="1"/>
</dbReference>
<dbReference type="PANTHER" id="PTHR42982:SF1">
    <property type="entry name" value="SEC-INDEPENDENT PROTEIN TRANSLOCASE PROTEIN TATA"/>
    <property type="match status" value="1"/>
</dbReference>
<dbReference type="Pfam" id="PF02416">
    <property type="entry name" value="TatA_B_E"/>
    <property type="match status" value="1"/>
</dbReference>
<accession>Q0VMA0</accession>
<organism>
    <name type="scientific">Alcanivorax borkumensis (strain ATCC 700651 / DSM 11573 / NCIMB 13689 / SK2)</name>
    <dbReference type="NCBI Taxonomy" id="393595"/>
    <lineage>
        <taxon>Bacteria</taxon>
        <taxon>Pseudomonadati</taxon>
        <taxon>Pseudomonadota</taxon>
        <taxon>Gammaproteobacteria</taxon>
        <taxon>Oceanospirillales</taxon>
        <taxon>Alcanivoracaceae</taxon>
        <taxon>Alcanivorax</taxon>
    </lineage>
</organism>
<comment type="function">
    <text evidence="1">Part of the twin-arginine translocation (Tat) system that transports large folded proteins containing a characteristic twin-arginine motif in their signal peptide across membranes. TatA could form the protein-conducting channel of the Tat system.</text>
</comment>
<comment type="subunit">
    <text evidence="1">The Tat system comprises two distinct complexes: a TatABC complex, containing multiple copies of TatA, TatB and TatC subunits, and a separate TatA complex, containing only TatA subunits. Substrates initially bind to the TatABC complex, which probably triggers association of the separate TatA complex to form the active translocon.</text>
</comment>
<comment type="subcellular location">
    <subcellularLocation>
        <location evidence="1">Cell inner membrane</location>
        <topology evidence="1">Single-pass membrane protein</topology>
    </subcellularLocation>
</comment>
<comment type="similarity">
    <text evidence="1">Belongs to the TatA/E family.</text>
</comment>
<sequence length="79" mass="8741">MFSGISIWQLLILLAIVVLLFGTKKLRNIGGDLGGAVKGFKSAMKDGEDEQDHKRLADDDQPQNKQDAEQKAEQEKDKA</sequence>
<feature type="chain" id="PRO_0000336623" description="Sec-independent protein translocase protein TatA">
    <location>
        <begin position="1"/>
        <end position="79"/>
    </location>
</feature>
<feature type="transmembrane region" description="Helical" evidence="1">
    <location>
        <begin position="1"/>
        <end position="21"/>
    </location>
</feature>
<feature type="region of interest" description="Disordered" evidence="2">
    <location>
        <begin position="44"/>
        <end position="79"/>
    </location>
</feature>
<feature type="compositionally biased region" description="Basic and acidic residues" evidence="2">
    <location>
        <begin position="44"/>
        <end position="58"/>
    </location>
</feature>
<feature type="compositionally biased region" description="Basic and acidic residues" evidence="2">
    <location>
        <begin position="66"/>
        <end position="79"/>
    </location>
</feature>